<proteinExistence type="inferred from homology"/>
<gene>
    <name evidence="1" type="primary">trhO</name>
    <name type="ordered locus">SSP0127</name>
</gene>
<keyword id="KW-0560">Oxidoreductase</keyword>
<keyword id="KW-1185">Reference proteome</keyword>
<keyword id="KW-0819">tRNA processing</keyword>
<protein>
    <recommendedName>
        <fullName evidence="1">tRNA uridine(34) hydroxylase</fullName>
        <ecNumber evidence="1">1.14.-.-</ecNumber>
    </recommendedName>
    <alternativeName>
        <fullName evidence="1">tRNA hydroxylation protein O</fullName>
    </alternativeName>
</protein>
<dbReference type="EC" id="1.14.-.-" evidence="1"/>
<dbReference type="EMBL" id="AP008934">
    <property type="protein sequence ID" value="BAE17272.1"/>
    <property type="molecule type" value="Genomic_DNA"/>
</dbReference>
<dbReference type="RefSeq" id="WP_002482073.1">
    <property type="nucleotide sequence ID" value="NZ_MTGA01000037.1"/>
</dbReference>
<dbReference type="SMR" id="Q4A0W6"/>
<dbReference type="KEGG" id="ssp:SSP0127"/>
<dbReference type="eggNOG" id="COG1054">
    <property type="taxonomic scope" value="Bacteria"/>
</dbReference>
<dbReference type="HOGENOM" id="CLU_038878_1_0_9"/>
<dbReference type="OrthoDB" id="9778326at2"/>
<dbReference type="Proteomes" id="UP000006371">
    <property type="component" value="Chromosome"/>
</dbReference>
<dbReference type="GO" id="GO:0016705">
    <property type="term" value="F:oxidoreductase activity, acting on paired donors, with incorporation or reduction of molecular oxygen"/>
    <property type="evidence" value="ECO:0007669"/>
    <property type="project" value="UniProtKB-UniRule"/>
</dbReference>
<dbReference type="GO" id="GO:0006400">
    <property type="term" value="P:tRNA modification"/>
    <property type="evidence" value="ECO:0007669"/>
    <property type="project" value="UniProtKB-UniRule"/>
</dbReference>
<dbReference type="CDD" id="cd01518">
    <property type="entry name" value="RHOD_YceA"/>
    <property type="match status" value="1"/>
</dbReference>
<dbReference type="Gene3D" id="3.30.70.100">
    <property type="match status" value="1"/>
</dbReference>
<dbReference type="Gene3D" id="3.40.250.10">
    <property type="entry name" value="Rhodanese-like domain"/>
    <property type="match status" value="1"/>
</dbReference>
<dbReference type="HAMAP" id="MF_00469">
    <property type="entry name" value="TrhO"/>
    <property type="match status" value="1"/>
</dbReference>
<dbReference type="InterPro" id="IPR001763">
    <property type="entry name" value="Rhodanese-like_dom"/>
</dbReference>
<dbReference type="InterPro" id="IPR036873">
    <property type="entry name" value="Rhodanese-like_dom_sf"/>
</dbReference>
<dbReference type="InterPro" id="IPR022111">
    <property type="entry name" value="Rhodanese_C"/>
</dbReference>
<dbReference type="InterPro" id="IPR020936">
    <property type="entry name" value="TrhO"/>
</dbReference>
<dbReference type="InterPro" id="IPR040503">
    <property type="entry name" value="TRHO_N"/>
</dbReference>
<dbReference type="NCBIfam" id="NF001135">
    <property type="entry name" value="PRK00142.1-3"/>
    <property type="match status" value="1"/>
</dbReference>
<dbReference type="PANTHER" id="PTHR43268:SF3">
    <property type="entry name" value="RHODANESE-LIKE DOMAIN-CONTAINING PROTEIN 7-RELATED"/>
    <property type="match status" value="1"/>
</dbReference>
<dbReference type="PANTHER" id="PTHR43268">
    <property type="entry name" value="THIOSULFATE SULFURTRANSFERASE/RHODANESE-LIKE DOMAIN-CONTAINING PROTEIN 2"/>
    <property type="match status" value="1"/>
</dbReference>
<dbReference type="Pfam" id="PF00581">
    <property type="entry name" value="Rhodanese"/>
    <property type="match status" value="1"/>
</dbReference>
<dbReference type="Pfam" id="PF12368">
    <property type="entry name" value="Rhodanese_C"/>
    <property type="match status" value="1"/>
</dbReference>
<dbReference type="Pfam" id="PF17773">
    <property type="entry name" value="UPF0176_N"/>
    <property type="match status" value="1"/>
</dbReference>
<dbReference type="SMART" id="SM00450">
    <property type="entry name" value="RHOD"/>
    <property type="match status" value="1"/>
</dbReference>
<dbReference type="SUPFAM" id="SSF52821">
    <property type="entry name" value="Rhodanese/Cell cycle control phosphatase"/>
    <property type="match status" value="1"/>
</dbReference>
<dbReference type="PROSITE" id="PS50206">
    <property type="entry name" value="RHODANESE_3"/>
    <property type="match status" value="1"/>
</dbReference>
<evidence type="ECO:0000255" key="1">
    <source>
        <dbReference type="HAMAP-Rule" id="MF_00469"/>
    </source>
</evidence>
<name>TRHO_STAS1</name>
<reference key="1">
    <citation type="journal article" date="2005" name="Proc. Natl. Acad. Sci. U.S.A.">
        <title>Whole genome sequence of Staphylococcus saprophyticus reveals the pathogenesis of uncomplicated urinary tract infection.</title>
        <authorList>
            <person name="Kuroda M."/>
            <person name="Yamashita A."/>
            <person name="Hirakawa H."/>
            <person name="Kumano M."/>
            <person name="Morikawa K."/>
            <person name="Higashide M."/>
            <person name="Maruyama A."/>
            <person name="Inose Y."/>
            <person name="Matoba K."/>
            <person name="Toh H."/>
            <person name="Kuhara S."/>
            <person name="Hattori M."/>
            <person name="Ohta T."/>
        </authorList>
    </citation>
    <scope>NUCLEOTIDE SEQUENCE [LARGE SCALE GENOMIC DNA]</scope>
    <source>
        <strain>ATCC 15305 / DSM 20229 / NCIMB 8711 / NCTC 7292 / S-41</strain>
    </source>
</reference>
<sequence>MDYRVLLYYKYTTIDDPELFATEHLAFCKDLELKGRILVSTEGINGTVSGTVEATDKYMEALKNDARFQGITFKVDEAEGHAFKKMHVRPRQEIVALDLEDDVNPRELTGNYLSPKEFREALLSDDTVVIDARNDYEYDLGHFRGAVRPDITRFRDLPDWIKENKEQFMDKKIVTYCTGGIRCEKFSGYLLKEGFEDVSQLEGGIATYGKDPETKGEFWDGKMYVFDERISVEVNHVDKTVVGKEWFDGTPCERYINCSNPECNKQILVSEENEARYLGACSHECAKHENNRYVKKHNISDEEKAKRLENFKELVK</sequence>
<accession>Q4A0W6</accession>
<comment type="function">
    <text evidence="1">Catalyzes oxygen-dependent 5-hydroxyuridine (ho5U) modification at position 34 in tRNAs.</text>
</comment>
<comment type="catalytic activity">
    <reaction evidence="1">
        <text>uridine(34) in tRNA + AH2 + O2 = 5-hydroxyuridine(34) in tRNA + A + H2O</text>
        <dbReference type="Rhea" id="RHEA:64224"/>
        <dbReference type="Rhea" id="RHEA-COMP:11727"/>
        <dbReference type="Rhea" id="RHEA-COMP:13381"/>
        <dbReference type="ChEBI" id="CHEBI:13193"/>
        <dbReference type="ChEBI" id="CHEBI:15377"/>
        <dbReference type="ChEBI" id="CHEBI:15379"/>
        <dbReference type="ChEBI" id="CHEBI:17499"/>
        <dbReference type="ChEBI" id="CHEBI:65315"/>
        <dbReference type="ChEBI" id="CHEBI:136877"/>
    </reaction>
</comment>
<comment type="similarity">
    <text evidence="1">Belongs to the TrhO family.</text>
</comment>
<feature type="chain" id="PRO_0000242948" description="tRNA uridine(34) hydroxylase">
    <location>
        <begin position="1"/>
        <end position="316"/>
    </location>
</feature>
<feature type="domain" description="Rhodanese" evidence="1">
    <location>
        <begin position="123"/>
        <end position="217"/>
    </location>
</feature>
<feature type="active site" description="Cysteine persulfide intermediate" evidence="1">
    <location>
        <position position="177"/>
    </location>
</feature>
<organism>
    <name type="scientific">Staphylococcus saprophyticus subsp. saprophyticus (strain ATCC 15305 / DSM 20229 / NCIMB 8711 / NCTC 7292 / S-41)</name>
    <dbReference type="NCBI Taxonomy" id="342451"/>
    <lineage>
        <taxon>Bacteria</taxon>
        <taxon>Bacillati</taxon>
        <taxon>Bacillota</taxon>
        <taxon>Bacilli</taxon>
        <taxon>Bacillales</taxon>
        <taxon>Staphylococcaceae</taxon>
        <taxon>Staphylococcus</taxon>
    </lineage>
</organism>